<sequence>MGDEEVQALVVDNGSGMCKAGFAGDDAPRAVFPSIVGRPRHQGVMVGMGQKDSYVGDEAQSKRGILTLKYPIEHGIVTNWDDMEKIWHHTFYNELRVAPEEHPVLLTEAPLNPKANREKMTQIMFETFNTPAMYVGIQAVLSLYASGRTTGIVLDSGDGVTHSVPIYEGYALPHAILRLDLAGRDLTDYLMKILTERGYSFTTTAEREIVRDIKEKLCYVALDFEQEMATAASSSSLEKSYELPDGQVITIGNERFRCPESLFQPSFLGMESAGIHESTFNAIMKCDVDIRKDLYANTVLSGGTTMYPGIADRMQKEITSLAPSTMKIKIVAPPERKYSVWIGGSILASLSTFQQMWISKQEYDESGPGIVHRKCF</sequence>
<feature type="chain" id="PRO_0000088928" description="Actin-1/4">
    <location>
        <begin position="1"/>
        <end position="376"/>
    </location>
</feature>
<dbReference type="EC" id="3.6.4.-" evidence="1"/>
<dbReference type="EMBL" id="U02282">
    <property type="protein sequence ID" value="AAA21481.1"/>
    <property type="molecule type" value="mRNA"/>
</dbReference>
<dbReference type="EMBL" id="U02283">
    <property type="protein sequence ID" value="AAA21482.1"/>
    <property type="molecule type" value="mRNA"/>
</dbReference>
<dbReference type="EMBL" id="U27835">
    <property type="protein sequence ID" value="AAA82602.1"/>
    <property type="molecule type" value="mRNA"/>
</dbReference>
<dbReference type="SMR" id="P68556"/>
<dbReference type="GO" id="GO:0005737">
    <property type="term" value="C:cytoplasm"/>
    <property type="evidence" value="ECO:0007669"/>
    <property type="project" value="UniProtKB-KW"/>
</dbReference>
<dbReference type="GO" id="GO:0005856">
    <property type="term" value="C:cytoskeleton"/>
    <property type="evidence" value="ECO:0007669"/>
    <property type="project" value="UniProtKB-SubCell"/>
</dbReference>
<dbReference type="GO" id="GO:0005524">
    <property type="term" value="F:ATP binding"/>
    <property type="evidence" value="ECO:0007669"/>
    <property type="project" value="UniProtKB-KW"/>
</dbReference>
<dbReference type="GO" id="GO:0016787">
    <property type="term" value="F:hydrolase activity"/>
    <property type="evidence" value="ECO:0007669"/>
    <property type="project" value="UniProtKB-KW"/>
</dbReference>
<dbReference type="CDD" id="cd10224">
    <property type="entry name" value="ASKHA_NBD_actin"/>
    <property type="match status" value="1"/>
</dbReference>
<dbReference type="FunFam" id="2.30.36.70:FF:000001">
    <property type="entry name" value="Actin, alpha skeletal muscle"/>
    <property type="match status" value="1"/>
</dbReference>
<dbReference type="FunFam" id="3.30.420.40:FF:000131">
    <property type="entry name" value="Actin, alpha skeletal muscle"/>
    <property type="match status" value="1"/>
</dbReference>
<dbReference type="FunFam" id="3.30.420.40:FF:000291">
    <property type="entry name" value="Actin, alpha skeletal muscle"/>
    <property type="match status" value="1"/>
</dbReference>
<dbReference type="FunFam" id="3.90.640.10:FF:000047">
    <property type="entry name" value="Actin, alpha skeletal muscle"/>
    <property type="match status" value="1"/>
</dbReference>
<dbReference type="FunFam" id="3.30.420.40:FF:000058">
    <property type="entry name" value="Putative actin-related protein 5"/>
    <property type="match status" value="1"/>
</dbReference>
<dbReference type="Gene3D" id="3.30.420.40">
    <property type="match status" value="2"/>
</dbReference>
<dbReference type="Gene3D" id="3.90.640.10">
    <property type="entry name" value="Actin, Chain A, domain 4"/>
    <property type="match status" value="1"/>
</dbReference>
<dbReference type="InterPro" id="IPR004000">
    <property type="entry name" value="Actin"/>
</dbReference>
<dbReference type="InterPro" id="IPR020902">
    <property type="entry name" value="Actin/actin-like_CS"/>
</dbReference>
<dbReference type="InterPro" id="IPR004001">
    <property type="entry name" value="Actin_CS"/>
</dbReference>
<dbReference type="InterPro" id="IPR043129">
    <property type="entry name" value="ATPase_NBD"/>
</dbReference>
<dbReference type="PANTHER" id="PTHR11937">
    <property type="entry name" value="ACTIN"/>
    <property type="match status" value="1"/>
</dbReference>
<dbReference type="Pfam" id="PF00022">
    <property type="entry name" value="Actin"/>
    <property type="match status" value="1"/>
</dbReference>
<dbReference type="PRINTS" id="PR00190">
    <property type="entry name" value="ACTIN"/>
</dbReference>
<dbReference type="SMART" id="SM00268">
    <property type="entry name" value="ACTIN"/>
    <property type="match status" value="1"/>
</dbReference>
<dbReference type="SUPFAM" id="SSF53067">
    <property type="entry name" value="Actin-like ATPase domain"/>
    <property type="match status" value="2"/>
</dbReference>
<dbReference type="PROSITE" id="PS00406">
    <property type="entry name" value="ACTINS_1"/>
    <property type="match status" value="1"/>
</dbReference>
<dbReference type="PROSITE" id="PS00432">
    <property type="entry name" value="ACTINS_2"/>
    <property type="match status" value="1"/>
</dbReference>
<dbReference type="PROSITE" id="PS01132">
    <property type="entry name" value="ACTINS_ACT_LIKE"/>
    <property type="match status" value="1"/>
</dbReference>
<organism>
    <name type="scientific">Dibothriocephalus dendriticus</name>
    <name type="common">Tapeworm</name>
    <name type="synonym">Diphyllobothrium dendriticum</name>
    <dbReference type="NCBI Taxonomy" id="28845"/>
    <lineage>
        <taxon>Eukaryota</taxon>
        <taxon>Metazoa</taxon>
        <taxon>Spiralia</taxon>
        <taxon>Lophotrochozoa</taxon>
        <taxon>Platyhelminthes</taxon>
        <taxon>Cestoda</taxon>
        <taxon>Eucestoda</taxon>
        <taxon>Diphyllobothriidea</taxon>
        <taxon>Diphyllobothriidae</taxon>
        <taxon>Dibothriocephalus</taxon>
    </lineage>
</organism>
<name>ACT1_DIBDE</name>
<keyword id="KW-0067">ATP-binding</keyword>
<keyword id="KW-0963">Cytoplasm</keyword>
<keyword id="KW-0206">Cytoskeleton</keyword>
<keyword id="KW-0378">Hydrolase</keyword>
<keyword id="KW-0547">Nucleotide-binding</keyword>
<reference key="1">
    <citation type="journal article" date="1994" name="Mol. Biochem. Parasitol.">
        <title>Cloning, sequencing and characterization of an actin cDNA in Diphyllobothrium dendriticum (Cestoda).</title>
        <authorList>
            <person name="Wahlberg M.H."/>
            <person name="Karlstedt K.A."/>
            <person name="Paatero G.I.L."/>
        </authorList>
    </citation>
    <scope>NUCLEOTIDE SEQUENCE [MRNA] OF 4-376 (ACT1)</scope>
</reference>
<reference key="2">
    <citation type="journal article" date="1997" name="J. Mol. Evol.">
        <title>Isolation and characterization of five actin cDNAs from the cestode Diphyllobothrium dendriticum: a phylogenetic study of the multigene family.</title>
        <authorList>
            <person name="Wahlberg M.H."/>
            <person name="Johnson M.S."/>
        </authorList>
    </citation>
    <scope>NUCLEOTIDE SEQUENCE [MRNA] (ACT4)</scope>
</reference>
<comment type="function">
    <text>Actins are highly conserved proteins that are involved in various types of cell motility and are ubiquitously expressed in all eukaryotic cells.</text>
</comment>
<comment type="catalytic activity">
    <reaction evidence="1">
        <text>ATP + H2O = ADP + phosphate + H(+)</text>
        <dbReference type="Rhea" id="RHEA:13065"/>
        <dbReference type="ChEBI" id="CHEBI:15377"/>
        <dbReference type="ChEBI" id="CHEBI:15378"/>
        <dbReference type="ChEBI" id="CHEBI:30616"/>
        <dbReference type="ChEBI" id="CHEBI:43474"/>
        <dbReference type="ChEBI" id="CHEBI:456216"/>
    </reaction>
</comment>
<comment type="subcellular location">
    <subcellularLocation>
        <location>Cytoplasm</location>
        <location>Cytoskeleton</location>
    </subcellularLocation>
</comment>
<comment type="similarity">
    <text evidence="2">Belongs to the actin family.</text>
</comment>
<proteinExistence type="evidence at transcript level"/>
<evidence type="ECO:0000250" key="1">
    <source>
        <dbReference type="UniProtKB" id="P68137"/>
    </source>
</evidence>
<evidence type="ECO:0000305" key="2"/>
<protein>
    <recommendedName>
        <fullName>Actin-1/4</fullName>
        <ecNumber evidence="1">3.6.4.-</ecNumber>
    </recommendedName>
</protein>
<gene>
    <name type="primary">ACT1</name>
</gene>
<gene>
    <name type="primary">ACT4</name>
</gene>
<accession>P68556</accession>
<accession>P14227</accession>
<accession>P38136</accession>